<sequence length="89" mass="9437">MAHKKAGGSSRNGRDSAGKRLGIKAYGGEHVIPGNIIARQRGTTWHPGLNVGMGTDHTLFAKVEGRVEFRAKANGRTFVSVLPIAQAAE</sequence>
<accession>Q2J3K2</accession>
<reference key="1">
    <citation type="submission" date="2006-01" db="EMBL/GenBank/DDBJ databases">
        <title>Complete sequence of Rhodopseudomonas palustris HaA2.</title>
        <authorList>
            <consortium name="US DOE Joint Genome Institute"/>
            <person name="Copeland A."/>
            <person name="Lucas S."/>
            <person name="Lapidus A."/>
            <person name="Barry K."/>
            <person name="Detter J.C."/>
            <person name="Glavina T."/>
            <person name="Hammon N."/>
            <person name="Israni S."/>
            <person name="Pitluck S."/>
            <person name="Chain P."/>
            <person name="Malfatti S."/>
            <person name="Shin M."/>
            <person name="Vergez L."/>
            <person name="Schmutz J."/>
            <person name="Larimer F."/>
            <person name="Land M."/>
            <person name="Hauser L."/>
            <person name="Pelletier D.A."/>
            <person name="Kyrpides N."/>
            <person name="Anderson I."/>
            <person name="Oda Y."/>
            <person name="Harwood C.S."/>
            <person name="Richardson P."/>
        </authorList>
    </citation>
    <scope>NUCLEOTIDE SEQUENCE [LARGE SCALE GENOMIC DNA]</scope>
    <source>
        <strain>HaA2</strain>
    </source>
</reference>
<organism>
    <name type="scientific">Rhodopseudomonas palustris (strain HaA2)</name>
    <dbReference type="NCBI Taxonomy" id="316058"/>
    <lineage>
        <taxon>Bacteria</taxon>
        <taxon>Pseudomonadati</taxon>
        <taxon>Pseudomonadota</taxon>
        <taxon>Alphaproteobacteria</taxon>
        <taxon>Hyphomicrobiales</taxon>
        <taxon>Nitrobacteraceae</taxon>
        <taxon>Rhodopseudomonas</taxon>
    </lineage>
</organism>
<proteinExistence type="inferred from homology"/>
<name>RL27_RHOP2</name>
<feature type="chain" id="PRO_1000017576" description="Large ribosomal subunit protein bL27">
    <location>
        <begin position="1"/>
        <end position="89"/>
    </location>
</feature>
<feature type="region of interest" description="Disordered" evidence="2">
    <location>
        <begin position="1"/>
        <end position="20"/>
    </location>
</feature>
<gene>
    <name evidence="1" type="primary">rpmA</name>
    <name type="ordered locus">RPB_0247</name>
</gene>
<protein>
    <recommendedName>
        <fullName evidence="1">Large ribosomal subunit protein bL27</fullName>
    </recommendedName>
    <alternativeName>
        <fullName evidence="3">50S ribosomal protein L27</fullName>
    </alternativeName>
</protein>
<dbReference type="EMBL" id="CP000250">
    <property type="protein sequence ID" value="ABD04958.1"/>
    <property type="molecule type" value="Genomic_DNA"/>
</dbReference>
<dbReference type="RefSeq" id="WP_011439148.1">
    <property type="nucleotide sequence ID" value="NC_007778.1"/>
</dbReference>
<dbReference type="SMR" id="Q2J3K2"/>
<dbReference type="STRING" id="316058.RPB_0247"/>
<dbReference type="KEGG" id="rpb:RPB_0247"/>
<dbReference type="eggNOG" id="COG0211">
    <property type="taxonomic scope" value="Bacteria"/>
</dbReference>
<dbReference type="HOGENOM" id="CLU_095424_4_1_5"/>
<dbReference type="OrthoDB" id="9803474at2"/>
<dbReference type="Proteomes" id="UP000008809">
    <property type="component" value="Chromosome"/>
</dbReference>
<dbReference type="GO" id="GO:0022625">
    <property type="term" value="C:cytosolic large ribosomal subunit"/>
    <property type="evidence" value="ECO:0007669"/>
    <property type="project" value="TreeGrafter"/>
</dbReference>
<dbReference type="GO" id="GO:0003735">
    <property type="term" value="F:structural constituent of ribosome"/>
    <property type="evidence" value="ECO:0007669"/>
    <property type="project" value="InterPro"/>
</dbReference>
<dbReference type="GO" id="GO:0006412">
    <property type="term" value="P:translation"/>
    <property type="evidence" value="ECO:0007669"/>
    <property type="project" value="UniProtKB-UniRule"/>
</dbReference>
<dbReference type="FunFam" id="2.40.50.100:FF:000020">
    <property type="entry name" value="50S ribosomal protein L27"/>
    <property type="match status" value="1"/>
</dbReference>
<dbReference type="Gene3D" id="2.40.50.100">
    <property type="match status" value="1"/>
</dbReference>
<dbReference type="HAMAP" id="MF_00539">
    <property type="entry name" value="Ribosomal_bL27"/>
    <property type="match status" value="1"/>
</dbReference>
<dbReference type="InterPro" id="IPR001684">
    <property type="entry name" value="Ribosomal_bL27"/>
</dbReference>
<dbReference type="InterPro" id="IPR018261">
    <property type="entry name" value="Ribosomal_bL27_CS"/>
</dbReference>
<dbReference type="NCBIfam" id="TIGR00062">
    <property type="entry name" value="L27"/>
    <property type="match status" value="1"/>
</dbReference>
<dbReference type="PANTHER" id="PTHR15893:SF0">
    <property type="entry name" value="LARGE RIBOSOMAL SUBUNIT PROTEIN BL27M"/>
    <property type="match status" value="1"/>
</dbReference>
<dbReference type="PANTHER" id="PTHR15893">
    <property type="entry name" value="RIBOSOMAL PROTEIN L27"/>
    <property type="match status" value="1"/>
</dbReference>
<dbReference type="Pfam" id="PF01016">
    <property type="entry name" value="Ribosomal_L27"/>
    <property type="match status" value="1"/>
</dbReference>
<dbReference type="PRINTS" id="PR00063">
    <property type="entry name" value="RIBOSOMALL27"/>
</dbReference>
<dbReference type="SUPFAM" id="SSF110324">
    <property type="entry name" value="Ribosomal L27 protein-like"/>
    <property type="match status" value="1"/>
</dbReference>
<dbReference type="PROSITE" id="PS00831">
    <property type="entry name" value="RIBOSOMAL_L27"/>
    <property type="match status" value="1"/>
</dbReference>
<keyword id="KW-1185">Reference proteome</keyword>
<keyword id="KW-0687">Ribonucleoprotein</keyword>
<keyword id="KW-0689">Ribosomal protein</keyword>
<evidence type="ECO:0000255" key="1">
    <source>
        <dbReference type="HAMAP-Rule" id="MF_00539"/>
    </source>
</evidence>
<evidence type="ECO:0000256" key="2">
    <source>
        <dbReference type="SAM" id="MobiDB-lite"/>
    </source>
</evidence>
<evidence type="ECO:0000305" key="3"/>
<comment type="similarity">
    <text evidence="1">Belongs to the bacterial ribosomal protein bL27 family.</text>
</comment>